<sequence>MHTRAIYPGTFDPITNGHVDLIERAAKLFKHVTIGIAANPSKQPRFTLEERVELVNRVTAHLDNVDVVGFSGLLVDFAKEQKASVLVRGLRAVSDFEYEFQLANMNRRLSPDLESVFLTPAEENSFISSTLVKEVALHGGDVSQFVHPEVAAALAAKLTSINT</sequence>
<accession>A4YCB1</accession>
<protein>
    <recommendedName>
        <fullName evidence="1">Phosphopantetheine adenylyltransferase</fullName>
        <ecNumber evidence="1">2.7.7.3</ecNumber>
    </recommendedName>
    <alternativeName>
        <fullName evidence="1">Dephospho-CoA pyrophosphorylase</fullName>
    </alternativeName>
    <alternativeName>
        <fullName evidence="1">Pantetheine-phosphate adenylyltransferase</fullName>
        <shortName evidence="1">PPAT</shortName>
    </alternativeName>
</protein>
<reference key="1">
    <citation type="submission" date="2007-04" db="EMBL/GenBank/DDBJ databases">
        <title>Complete sequence of Shewanella putrefaciens CN-32.</title>
        <authorList>
            <consortium name="US DOE Joint Genome Institute"/>
            <person name="Copeland A."/>
            <person name="Lucas S."/>
            <person name="Lapidus A."/>
            <person name="Barry K."/>
            <person name="Detter J.C."/>
            <person name="Glavina del Rio T."/>
            <person name="Hammon N."/>
            <person name="Israni S."/>
            <person name="Dalin E."/>
            <person name="Tice H."/>
            <person name="Pitluck S."/>
            <person name="Chain P."/>
            <person name="Malfatti S."/>
            <person name="Shin M."/>
            <person name="Vergez L."/>
            <person name="Schmutz J."/>
            <person name="Larimer F."/>
            <person name="Land M."/>
            <person name="Hauser L."/>
            <person name="Kyrpides N."/>
            <person name="Mikhailova N."/>
            <person name="Romine M.F."/>
            <person name="Fredrickson J."/>
            <person name="Tiedje J."/>
            <person name="Richardson P."/>
        </authorList>
    </citation>
    <scope>NUCLEOTIDE SEQUENCE [LARGE SCALE GENOMIC DNA]</scope>
    <source>
        <strain>CN-32 / ATCC BAA-453</strain>
    </source>
</reference>
<keyword id="KW-0067">ATP-binding</keyword>
<keyword id="KW-0173">Coenzyme A biosynthesis</keyword>
<keyword id="KW-0963">Cytoplasm</keyword>
<keyword id="KW-0460">Magnesium</keyword>
<keyword id="KW-0547">Nucleotide-binding</keyword>
<keyword id="KW-0548">Nucleotidyltransferase</keyword>
<keyword id="KW-0808">Transferase</keyword>
<proteinExistence type="inferred from homology"/>
<name>COAD_SHEPC</name>
<organism>
    <name type="scientific">Shewanella putrefaciens (strain CN-32 / ATCC BAA-453)</name>
    <dbReference type="NCBI Taxonomy" id="319224"/>
    <lineage>
        <taxon>Bacteria</taxon>
        <taxon>Pseudomonadati</taxon>
        <taxon>Pseudomonadota</taxon>
        <taxon>Gammaproteobacteria</taxon>
        <taxon>Alteromonadales</taxon>
        <taxon>Shewanellaceae</taxon>
        <taxon>Shewanella</taxon>
    </lineage>
</organism>
<feature type="chain" id="PRO_1000011233" description="Phosphopantetheine adenylyltransferase">
    <location>
        <begin position="1"/>
        <end position="163"/>
    </location>
</feature>
<feature type="binding site" evidence="1">
    <location>
        <begin position="10"/>
        <end position="11"/>
    </location>
    <ligand>
        <name>ATP</name>
        <dbReference type="ChEBI" id="CHEBI:30616"/>
    </ligand>
</feature>
<feature type="binding site" evidence="1">
    <location>
        <position position="10"/>
    </location>
    <ligand>
        <name>substrate</name>
    </ligand>
</feature>
<feature type="binding site" evidence="1">
    <location>
        <position position="18"/>
    </location>
    <ligand>
        <name>ATP</name>
        <dbReference type="ChEBI" id="CHEBI:30616"/>
    </ligand>
</feature>
<feature type="binding site" evidence="1">
    <location>
        <position position="42"/>
    </location>
    <ligand>
        <name>substrate</name>
    </ligand>
</feature>
<feature type="binding site" evidence="1">
    <location>
        <position position="74"/>
    </location>
    <ligand>
        <name>substrate</name>
    </ligand>
</feature>
<feature type="binding site" evidence="1">
    <location>
        <position position="88"/>
    </location>
    <ligand>
        <name>substrate</name>
    </ligand>
</feature>
<feature type="binding site" evidence="1">
    <location>
        <begin position="89"/>
        <end position="91"/>
    </location>
    <ligand>
        <name>ATP</name>
        <dbReference type="ChEBI" id="CHEBI:30616"/>
    </ligand>
</feature>
<feature type="binding site" evidence="1">
    <location>
        <position position="99"/>
    </location>
    <ligand>
        <name>ATP</name>
        <dbReference type="ChEBI" id="CHEBI:30616"/>
    </ligand>
</feature>
<feature type="binding site" evidence="1">
    <location>
        <begin position="124"/>
        <end position="130"/>
    </location>
    <ligand>
        <name>ATP</name>
        <dbReference type="ChEBI" id="CHEBI:30616"/>
    </ligand>
</feature>
<feature type="site" description="Transition state stabilizer" evidence="1">
    <location>
        <position position="18"/>
    </location>
</feature>
<comment type="function">
    <text evidence="1">Reversibly transfers an adenylyl group from ATP to 4'-phosphopantetheine, yielding dephospho-CoA (dPCoA) and pyrophosphate.</text>
</comment>
<comment type="catalytic activity">
    <reaction evidence="1">
        <text>(R)-4'-phosphopantetheine + ATP + H(+) = 3'-dephospho-CoA + diphosphate</text>
        <dbReference type="Rhea" id="RHEA:19801"/>
        <dbReference type="ChEBI" id="CHEBI:15378"/>
        <dbReference type="ChEBI" id="CHEBI:30616"/>
        <dbReference type="ChEBI" id="CHEBI:33019"/>
        <dbReference type="ChEBI" id="CHEBI:57328"/>
        <dbReference type="ChEBI" id="CHEBI:61723"/>
        <dbReference type="EC" id="2.7.7.3"/>
    </reaction>
</comment>
<comment type="cofactor">
    <cofactor evidence="1">
        <name>Mg(2+)</name>
        <dbReference type="ChEBI" id="CHEBI:18420"/>
    </cofactor>
</comment>
<comment type="pathway">
    <text evidence="1">Cofactor biosynthesis; coenzyme A biosynthesis; CoA from (R)-pantothenate: step 4/5.</text>
</comment>
<comment type="subunit">
    <text evidence="1">Homohexamer.</text>
</comment>
<comment type="subcellular location">
    <subcellularLocation>
        <location evidence="1">Cytoplasm</location>
    </subcellularLocation>
</comment>
<comment type="similarity">
    <text evidence="1">Belongs to the bacterial CoaD family.</text>
</comment>
<evidence type="ECO:0000255" key="1">
    <source>
        <dbReference type="HAMAP-Rule" id="MF_00151"/>
    </source>
</evidence>
<dbReference type="EC" id="2.7.7.3" evidence="1"/>
<dbReference type="EMBL" id="CP000681">
    <property type="protein sequence ID" value="ABP77594.1"/>
    <property type="molecule type" value="Genomic_DNA"/>
</dbReference>
<dbReference type="SMR" id="A4YCB1"/>
<dbReference type="STRING" id="319224.Sputcn32_3888"/>
<dbReference type="KEGG" id="spc:Sputcn32_3888"/>
<dbReference type="eggNOG" id="COG0669">
    <property type="taxonomic scope" value="Bacteria"/>
</dbReference>
<dbReference type="HOGENOM" id="CLU_100149_0_1_6"/>
<dbReference type="UniPathway" id="UPA00241">
    <property type="reaction ID" value="UER00355"/>
</dbReference>
<dbReference type="GO" id="GO:0005737">
    <property type="term" value="C:cytoplasm"/>
    <property type="evidence" value="ECO:0007669"/>
    <property type="project" value="UniProtKB-SubCell"/>
</dbReference>
<dbReference type="GO" id="GO:0005524">
    <property type="term" value="F:ATP binding"/>
    <property type="evidence" value="ECO:0007669"/>
    <property type="project" value="UniProtKB-KW"/>
</dbReference>
<dbReference type="GO" id="GO:0004595">
    <property type="term" value="F:pantetheine-phosphate adenylyltransferase activity"/>
    <property type="evidence" value="ECO:0007669"/>
    <property type="project" value="UniProtKB-UniRule"/>
</dbReference>
<dbReference type="GO" id="GO:0015937">
    <property type="term" value="P:coenzyme A biosynthetic process"/>
    <property type="evidence" value="ECO:0007669"/>
    <property type="project" value="UniProtKB-UniRule"/>
</dbReference>
<dbReference type="CDD" id="cd02163">
    <property type="entry name" value="PPAT"/>
    <property type="match status" value="1"/>
</dbReference>
<dbReference type="FunFam" id="3.40.50.620:FF:000012">
    <property type="entry name" value="Phosphopantetheine adenylyltransferase"/>
    <property type="match status" value="1"/>
</dbReference>
<dbReference type="Gene3D" id="3.40.50.620">
    <property type="entry name" value="HUPs"/>
    <property type="match status" value="1"/>
</dbReference>
<dbReference type="HAMAP" id="MF_00151">
    <property type="entry name" value="PPAT_bact"/>
    <property type="match status" value="1"/>
</dbReference>
<dbReference type="InterPro" id="IPR004821">
    <property type="entry name" value="Cyt_trans-like"/>
</dbReference>
<dbReference type="InterPro" id="IPR001980">
    <property type="entry name" value="PPAT"/>
</dbReference>
<dbReference type="InterPro" id="IPR014729">
    <property type="entry name" value="Rossmann-like_a/b/a_fold"/>
</dbReference>
<dbReference type="NCBIfam" id="TIGR01510">
    <property type="entry name" value="coaD_prev_kdtB"/>
    <property type="match status" value="1"/>
</dbReference>
<dbReference type="NCBIfam" id="TIGR00125">
    <property type="entry name" value="cyt_tran_rel"/>
    <property type="match status" value="1"/>
</dbReference>
<dbReference type="PANTHER" id="PTHR21342">
    <property type="entry name" value="PHOSPHOPANTETHEINE ADENYLYLTRANSFERASE"/>
    <property type="match status" value="1"/>
</dbReference>
<dbReference type="PANTHER" id="PTHR21342:SF1">
    <property type="entry name" value="PHOSPHOPANTETHEINE ADENYLYLTRANSFERASE"/>
    <property type="match status" value="1"/>
</dbReference>
<dbReference type="Pfam" id="PF01467">
    <property type="entry name" value="CTP_transf_like"/>
    <property type="match status" value="1"/>
</dbReference>
<dbReference type="PRINTS" id="PR01020">
    <property type="entry name" value="LPSBIOSNTHSS"/>
</dbReference>
<dbReference type="SUPFAM" id="SSF52374">
    <property type="entry name" value="Nucleotidylyl transferase"/>
    <property type="match status" value="1"/>
</dbReference>
<gene>
    <name evidence="1" type="primary">coaD</name>
    <name type="ordered locus">Sputcn32_3888</name>
</gene>